<dbReference type="EMBL" id="BC076157">
    <property type="protein sequence ID" value="AAH76157.1"/>
    <property type="status" value="ALT_INIT"/>
    <property type="molecule type" value="mRNA"/>
</dbReference>
<dbReference type="RefSeq" id="NP_001002417.2">
    <property type="nucleotide sequence ID" value="NM_001002417.2"/>
</dbReference>
<dbReference type="SMR" id="Q6DH26"/>
<dbReference type="FunCoup" id="Q6DH26">
    <property type="interactions" value="1966"/>
</dbReference>
<dbReference type="STRING" id="7955.ENSDARP00000104686"/>
<dbReference type="PaxDb" id="7955-ENSDARP00000104686"/>
<dbReference type="Ensembl" id="ENSDART00000124416">
    <property type="protein sequence ID" value="ENSDARP00000104686"/>
    <property type="gene ID" value="ENSDARG00000008020"/>
</dbReference>
<dbReference type="GeneID" id="436690"/>
<dbReference type="KEGG" id="dre:436690"/>
<dbReference type="AGR" id="ZFIN:ZDB-GENE-040718-114"/>
<dbReference type="CTD" id="51003"/>
<dbReference type="ZFIN" id="ZDB-GENE-040718-114">
    <property type="gene designation" value="med31"/>
</dbReference>
<dbReference type="eggNOG" id="KOG4086">
    <property type="taxonomic scope" value="Eukaryota"/>
</dbReference>
<dbReference type="HOGENOM" id="CLU_071681_5_1_1"/>
<dbReference type="InParanoid" id="Q6DH26"/>
<dbReference type="OMA" id="QGILNQP"/>
<dbReference type="OrthoDB" id="10257739at2759"/>
<dbReference type="PhylomeDB" id="Q6DH26"/>
<dbReference type="TreeFam" id="TF105799"/>
<dbReference type="PRO" id="PR:Q6DH26"/>
<dbReference type="Proteomes" id="UP000000437">
    <property type="component" value="Chromosome 21"/>
</dbReference>
<dbReference type="Bgee" id="ENSDARG00000008020">
    <property type="expression patterns" value="Expressed in testis and 29 other cell types or tissues"/>
</dbReference>
<dbReference type="GO" id="GO:0070847">
    <property type="term" value="C:core mediator complex"/>
    <property type="evidence" value="ECO:0000318"/>
    <property type="project" value="GO_Central"/>
</dbReference>
<dbReference type="GO" id="GO:0016592">
    <property type="term" value="C:mediator complex"/>
    <property type="evidence" value="ECO:0000318"/>
    <property type="project" value="GO_Central"/>
</dbReference>
<dbReference type="GO" id="GO:0003712">
    <property type="term" value="F:transcription coregulator activity"/>
    <property type="evidence" value="ECO:0007669"/>
    <property type="project" value="InterPro"/>
</dbReference>
<dbReference type="GO" id="GO:0006357">
    <property type="term" value="P:regulation of transcription by RNA polymerase II"/>
    <property type="evidence" value="ECO:0000318"/>
    <property type="project" value="GO_Central"/>
</dbReference>
<dbReference type="FunFam" id="1.10.10.1340:FF:000001">
    <property type="entry name" value="Mediator of RNA polymerase II transcription subunit 31"/>
    <property type="match status" value="1"/>
</dbReference>
<dbReference type="Gene3D" id="1.10.10.1340">
    <property type="entry name" value="Mediator of RNA polymerase II, submodule Med31 (Soh1)"/>
    <property type="match status" value="1"/>
</dbReference>
<dbReference type="InterPro" id="IPR038089">
    <property type="entry name" value="Med31_sf"/>
</dbReference>
<dbReference type="InterPro" id="IPR008831">
    <property type="entry name" value="Mediator_Med31"/>
</dbReference>
<dbReference type="PANTHER" id="PTHR13186">
    <property type="entry name" value="MEDIATOR OF RNA POLYMERASE II TRANSCRIPTION SUBUNIT 31"/>
    <property type="match status" value="1"/>
</dbReference>
<dbReference type="Pfam" id="PF05669">
    <property type="entry name" value="Med31"/>
    <property type="match status" value="1"/>
</dbReference>
<keyword id="KW-0010">Activator</keyword>
<keyword id="KW-0539">Nucleus</keyword>
<keyword id="KW-1185">Reference proteome</keyword>
<keyword id="KW-0804">Transcription</keyword>
<keyword id="KW-0805">Transcription regulation</keyword>
<comment type="function">
    <text evidence="1">Component of the Mediator complex, a coactivator involved in the regulated transcription of nearly all RNA polymerase II-dependent genes. Mediator functions as a bridge to convey information from gene-specific regulatory proteins to the basal RNA polymerase II transcription machinery. Mediator is recruited to promoters by direct interactions with regulatory proteins and serves as a scaffold for the assembly of a functional preinitiation complex with RNA polymerase II and the general transcription factors (By similarity).</text>
</comment>
<comment type="subunit">
    <text evidence="1">Component of the Mediator complex.</text>
</comment>
<comment type="subcellular location">
    <subcellularLocation>
        <location evidence="3">Nucleus</location>
    </subcellularLocation>
</comment>
<comment type="similarity">
    <text evidence="3">Belongs to the Mediator complex subunit 31 family.</text>
</comment>
<comment type="sequence caution" evidence="3">
    <conflict type="erroneous initiation">
        <sequence resource="EMBL-CDS" id="AAH76157"/>
    </conflict>
</comment>
<sequence>MAGVMETDEQARQRFQLELEFVQCLANPNYLNFLAQRGYLREKPFVNYLKYLLYWKEPEYAKFLKYPHCLHMLELLQYEHFRKELVNAQCAKFIDEQQILHWQHYSRKRTRLQQALAEQQQQQQPQAPSHANTTSK</sequence>
<name>MED31_DANRE</name>
<accession>Q6DH26</accession>
<organism>
    <name type="scientific">Danio rerio</name>
    <name type="common">Zebrafish</name>
    <name type="synonym">Brachydanio rerio</name>
    <dbReference type="NCBI Taxonomy" id="7955"/>
    <lineage>
        <taxon>Eukaryota</taxon>
        <taxon>Metazoa</taxon>
        <taxon>Chordata</taxon>
        <taxon>Craniata</taxon>
        <taxon>Vertebrata</taxon>
        <taxon>Euteleostomi</taxon>
        <taxon>Actinopterygii</taxon>
        <taxon>Neopterygii</taxon>
        <taxon>Teleostei</taxon>
        <taxon>Ostariophysi</taxon>
        <taxon>Cypriniformes</taxon>
        <taxon>Danionidae</taxon>
        <taxon>Danioninae</taxon>
        <taxon>Danio</taxon>
    </lineage>
</organism>
<evidence type="ECO:0000250" key="1"/>
<evidence type="ECO:0000256" key="2">
    <source>
        <dbReference type="SAM" id="MobiDB-lite"/>
    </source>
</evidence>
<evidence type="ECO:0000305" key="3"/>
<feature type="chain" id="PRO_0000305708" description="Mediator of RNA polymerase II transcription subunit 31">
    <location>
        <begin position="1"/>
        <end position="136"/>
    </location>
</feature>
<feature type="region of interest" description="Disordered" evidence="2">
    <location>
        <begin position="117"/>
        <end position="136"/>
    </location>
</feature>
<feature type="compositionally biased region" description="Low complexity" evidence="2">
    <location>
        <begin position="117"/>
        <end position="128"/>
    </location>
</feature>
<proteinExistence type="evidence at transcript level"/>
<gene>
    <name type="primary">med31</name>
    <name type="synonym">soh1</name>
</gene>
<reference key="1">
    <citation type="submission" date="2004-07" db="EMBL/GenBank/DDBJ databases">
        <authorList>
            <consortium name="NIH - Zebrafish Gene Collection (ZGC) project"/>
        </authorList>
    </citation>
    <scope>NUCLEOTIDE SEQUENCE [LARGE SCALE MRNA]</scope>
    <source>
        <tissue>Eye</tissue>
    </source>
</reference>
<protein>
    <recommendedName>
        <fullName>Mediator of RNA polymerase II transcription subunit 31</fullName>
    </recommendedName>
    <alternativeName>
        <fullName>Mediator complex subunit 31</fullName>
    </alternativeName>
    <alternativeName>
        <fullName>Mediator complex subunit soh1</fullName>
    </alternativeName>
</protein>